<accession>Q31UV8</accession>
<comment type="function">
    <text evidence="1">Could be involved in insertion of integral membrane proteins into the membrane.</text>
</comment>
<comment type="subcellular location">
    <subcellularLocation>
        <location evidence="1">Cell inner membrane</location>
        <topology evidence="1">Peripheral membrane protein</topology>
        <orientation evidence="1">Cytoplasmic side</orientation>
    </subcellularLocation>
</comment>
<comment type="similarity">
    <text evidence="1">Belongs to the UPF0161 family.</text>
</comment>
<evidence type="ECO:0000255" key="1">
    <source>
        <dbReference type="HAMAP-Rule" id="MF_00386"/>
    </source>
</evidence>
<gene>
    <name evidence="1" type="primary">yidD</name>
    <name type="ordered locus">SBO_3672</name>
</gene>
<reference key="1">
    <citation type="journal article" date="2005" name="Nucleic Acids Res.">
        <title>Genome dynamics and diversity of Shigella species, the etiologic agents of bacillary dysentery.</title>
        <authorList>
            <person name="Yang F."/>
            <person name="Yang J."/>
            <person name="Zhang X."/>
            <person name="Chen L."/>
            <person name="Jiang Y."/>
            <person name="Yan Y."/>
            <person name="Tang X."/>
            <person name="Wang J."/>
            <person name="Xiong Z."/>
            <person name="Dong J."/>
            <person name="Xue Y."/>
            <person name="Zhu Y."/>
            <person name="Xu X."/>
            <person name="Sun L."/>
            <person name="Chen S."/>
            <person name="Nie H."/>
            <person name="Peng J."/>
            <person name="Xu J."/>
            <person name="Wang Y."/>
            <person name="Yuan Z."/>
            <person name="Wen Y."/>
            <person name="Yao Z."/>
            <person name="Shen Y."/>
            <person name="Qiang B."/>
            <person name="Hou Y."/>
            <person name="Yu J."/>
            <person name="Jin Q."/>
        </authorList>
    </citation>
    <scope>NUCLEOTIDE SEQUENCE [LARGE SCALE GENOMIC DNA]</scope>
    <source>
        <strain>Sb227</strain>
    </source>
</reference>
<proteinExistence type="inferred from homology"/>
<feature type="chain" id="PRO_0000253166" description="Putative membrane protein insertion efficiency factor">
    <location>
        <begin position="1"/>
        <end position="85"/>
    </location>
</feature>
<protein>
    <recommendedName>
        <fullName evidence="1">Putative membrane protein insertion efficiency factor</fullName>
    </recommendedName>
</protein>
<organism>
    <name type="scientific">Shigella boydii serotype 4 (strain Sb227)</name>
    <dbReference type="NCBI Taxonomy" id="300268"/>
    <lineage>
        <taxon>Bacteria</taxon>
        <taxon>Pseudomonadati</taxon>
        <taxon>Pseudomonadota</taxon>
        <taxon>Gammaproteobacteria</taxon>
        <taxon>Enterobacterales</taxon>
        <taxon>Enterobacteriaceae</taxon>
        <taxon>Shigella</taxon>
    </lineage>
</organism>
<keyword id="KW-0997">Cell inner membrane</keyword>
<keyword id="KW-1003">Cell membrane</keyword>
<keyword id="KW-0472">Membrane</keyword>
<name>YIDD_SHIBS</name>
<dbReference type="EMBL" id="CP000036">
    <property type="protein sequence ID" value="ABB68150.1"/>
    <property type="molecule type" value="Genomic_DNA"/>
</dbReference>
<dbReference type="RefSeq" id="WP_001307474.1">
    <property type="nucleotide sequence ID" value="NC_007613.1"/>
</dbReference>
<dbReference type="GeneID" id="97443257"/>
<dbReference type="KEGG" id="sbo:SBO_3672"/>
<dbReference type="HOGENOM" id="CLU_144811_5_2_6"/>
<dbReference type="Proteomes" id="UP000007067">
    <property type="component" value="Chromosome"/>
</dbReference>
<dbReference type="GO" id="GO:0005886">
    <property type="term" value="C:plasma membrane"/>
    <property type="evidence" value="ECO:0007669"/>
    <property type="project" value="UniProtKB-SubCell"/>
</dbReference>
<dbReference type="HAMAP" id="MF_00386">
    <property type="entry name" value="UPF0161_YidD"/>
    <property type="match status" value="1"/>
</dbReference>
<dbReference type="InterPro" id="IPR002696">
    <property type="entry name" value="Membr_insert_effic_factor_YidD"/>
</dbReference>
<dbReference type="NCBIfam" id="TIGR00278">
    <property type="entry name" value="membrane protein insertion efficiency factor YidD"/>
    <property type="match status" value="1"/>
</dbReference>
<dbReference type="PANTHER" id="PTHR33383">
    <property type="entry name" value="MEMBRANE PROTEIN INSERTION EFFICIENCY FACTOR-RELATED"/>
    <property type="match status" value="1"/>
</dbReference>
<dbReference type="PANTHER" id="PTHR33383:SF1">
    <property type="entry name" value="MEMBRANE PROTEIN INSERTION EFFICIENCY FACTOR-RELATED"/>
    <property type="match status" value="1"/>
</dbReference>
<dbReference type="Pfam" id="PF01809">
    <property type="entry name" value="YidD"/>
    <property type="match status" value="1"/>
</dbReference>
<dbReference type="SMART" id="SM01234">
    <property type="entry name" value="Haemolytic"/>
    <property type="match status" value="1"/>
</dbReference>
<sequence>MAPPLSPGSRVLIALIRVYQRLISPLLGPHCRFTPTCSSYGIEALRRFGVIKGSWLTVKRVLKCHPLHPGGDDPVPPGPFDTREH</sequence>